<accession>P21414</accession>
<sequence length="1686" mass="188090">MGQDNSTPISLTLNHWRDVRTRAHNLSVEIKKGKWQTFCSSEWPTFGVGWPPEGTFNLSVIFAVKKIVFQENGGHPDQVPYIVVWQDLAQNPPPWVPASAKVAVVSDTRRPVAGRPSAPPRPPIYPATDDLLLLSEPTPPPYPAALPPPLAPQAIGPPSGQMPDSSDPEGPAAGTRSRRARSPADNSGPDSTVILPLRAIGPPAEPNGLVPLQYWPFSSADLYNWKSNHPSFSENPAGLTGLLESLMFSHQPTWDDCQQLLQILFTTEERERILLEARKNVLGDNGAPTQLENLINEAFPLNRPHWDYNTAAGRERLLVYRRTLVAGLKGAARRPTNLAKVREVLQGPAEPPSVFLERLMEAYRRYTPFDPSSEGQQAAVAMAFIGQSAPDIKKKLQRLEGLQDYSLQDLVKEAEKVYHKRETEEERQEREKKEAEEKERRRDRPKKKNLTKILAAVVSREGSTGRQTGNLSNQAKKTPRDGRPPLDKDQCAYCKEKGHWARECPRKKHVREAKVLALDNXGSQGSDPLPEPRVTLTVEGTPIEFLVDTGAEHSVLTQPMGKVGSRRTVVEGATGSKVYPWTTKRLLKIGHKQVTHSFLVIPECPAPLLGRDLLTKLKAQIQFSAEGPQVTWGERPTMCLVLNLEEEYRLHEKPVPSSIDPSWLQLFPTVWAERAGMGLANQVPPVVVELRSGASPVAVRQYPMSKEAREGIRPHIQKFLDLGVLVPCRSPWNTPLLPVKKPGTNDYRPVQDLREINKRVQDIHPTVPNPYNLLSSLPPSYTWYSVLDLKDAFFCLRLHPNSQPLFAFEWKDPEKGNTGQLTWTRLPQGFKNSPTLFDEALHRDLAPFRALNPQVVLLQYVDDLLVAAPTYEDCKKGTQKLLQELSKLGYRVSAKKAQLCQREVTYLGYLLKEGKRWLTPARKATVMKIPVPTTPRQVREFLGTAGFCRLWIPGFASLAAPLYPLTKESIPFIWTEEHQQAFDHIKKALLSAPALALPDLTKPFTLYIDERAGVARGVLTQTLGPWRRPVAYLSKKLDPVASGWPTCLKAVAAVALLLKDADKLTLGQNVTVIASHSLESIVRQPPDRWMTNARMTHYQSLLLNERVSFAPPAVLNPATLLPVESEATPVHRCSEILAEETGTRRDLEDQPLPGVPTWYTDGSSFITEGKRRAGAPIVDGKRTVWASSLPEGTSAQKAELVALTQALRLAEGKNINIYTDSRYAFATAHIHGAIYKQRGLLTSAGKDIKNKEEILALLEAIHLPRRVAIIHCPGHQRGSNPVATGNRRADEAAKQAALSTRVLAGTTKPQEPIEPAQEKTRPRELTPDRGKEFIKRLHQLTHLGPEKLLQLVNRTSLLIPNLQSAVREVTSQCQACAMTNAVTTYRETGKRQRGDRPGVYWEVDFTEIKPGRYGNKYLLVFIDTFSGWVEAFPTKTETALIVCKKILEEILPRFGIPKVLGSDNGPAFVAQVSQGLATQLGINWKLHCAYRPQSSGQVERMNRTIKETLTKLALETGGKDWVTLLPLALLRARNTPGRFGLTPYEILYGGPPPILESGETLGPDDRFLPVLFTHLKALEIVRTQIWDQIKEVYKPGTVTIPHPFQVGDQVLVRRHRPSSLEPRWKGPYLVLLTTPTAVKVDGIAAWVHASHLKPAPPSAPDESWELEKTDHPLKLRIRRRRDESAK</sequence>
<organismHost>
    <name type="scientific">Hylobatidae</name>
    <name type="common">gibbons</name>
    <dbReference type="NCBI Taxonomy" id="9577"/>
</organismHost>
<keyword id="KW-0064">Aspartyl protease</keyword>
<keyword id="KW-0167">Capsid protein</keyword>
<keyword id="KW-0175">Coiled coil</keyword>
<keyword id="KW-0229">DNA integration</keyword>
<keyword id="KW-0233">DNA recombination</keyword>
<keyword id="KW-0238">DNA-binding</keyword>
<keyword id="KW-0239">DNA-directed DNA polymerase</keyword>
<keyword id="KW-0255">Endonuclease</keyword>
<keyword id="KW-1032">Host cell membrane</keyword>
<keyword id="KW-1035">Host cytoplasm</keyword>
<keyword id="KW-1039">Host endosome</keyword>
<keyword id="KW-1043">Host membrane</keyword>
<keyword id="KW-0945">Host-virus interaction</keyword>
<keyword id="KW-0378">Hydrolase</keyword>
<keyword id="KW-0449">Lipoprotein</keyword>
<keyword id="KW-0460">Magnesium</keyword>
<keyword id="KW-0472">Membrane</keyword>
<keyword id="KW-0479">Metal-binding</keyword>
<keyword id="KW-0511">Multifunctional enzyme</keyword>
<keyword id="KW-0519">Myristate</keyword>
<keyword id="KW-0540">Nuclease</keyword>
<keyword id="KW-0548">Nucleotidyltransferase</keyword>
<keyword id="KW-0597">Phosphoprotein</keyword>
<keyword id="KW-0645">Protease</keyword>
<keyword id="KW-1159">RNA suppression of termination</keyword>
<keyword id="KW-0694">RNA-binding</keyword>
<keyword id="KW-0695">RNA-directed DNA polymerase</keyword>
<keyword id="KW-0808">Transferase</keyword>
<keyword id="KW-1179">Viral genome integration</keyword>
<keyword id="KW-0468">Viral matrix protein</keyword>
<keyword id="KW-0543">Viral nucleoprotein</keyword>
<keyword id="KW-0946">Virion</keyword>
<keyword id="KW-1160">Virus entry into host cell</keyword>
<keyword id="KW-0862">Zinc</keyword>
<keyword id="KW-0863">Zinc-finger</keyword>
<feature type="initiator methionine" description="Removed" evidence="5">
    <location>
        <position position="1"/>
    </location>
</feature>
<feature type="chain" id="PRO_0000259719" description="Gag-Pol polyprotein">
    <location>
        <begin position="2"/>
        <end position="1686"/>
    </location>
</feature>
<feature type="chain" id="PRO_0000442883" description="Matrix protein p15">
    <location>
        <begin position="2"/>
        <end position="125"/>
    </location>
</feature>
<feature type="chain" id="PRO_0000442884" description="RNA-binding phosphoprotein p12">
    <location>
        <begin position="126"/>
        <end position="195"/>
    </location>
</feature>
<feature type="chain" id="PRO_0000442885" description="Capsid protein p30">
    <location>
        <begin position="196"/>
        <end position="454"/>
    </location>
</feature>
<feature type="chain" id="PRO_0000442886" description="Nucleocapsid protein p10-Pol">
    <location>
        <begin position="455"/>
        <end position="516"/>
    </location>
</feature>
<feature type="chain" id="PRO_0000026128" description="Protease">
    <location>
        <begin position="517"/>
        <end position="640"/>
    </location>
</feature>
<feature type="chain" id="PRO_0000259720" description="Reverse transcriptase/ribonuclease H">
    <location>
        <begin position="641"/>
        <end position="1309"/>
    </location>
</feature>
<feature type="chain" id="PRO_0000259721" description="Integrase">
    <location>
        <begin position="1310"/>
        <end position="1686"/>
    </location>
</feature>
<feature type="domain" description="Peptidase A2" evidence="7">
    <location>
        <begin position="543"/>
        <end position="613"/>
    </location>
</feature>
<feature type="domain" description="Reverse transcriptase" evidence="8">
    <location>
        <begin position="720"/>
        <end position="911"/>
    </location>
</feature>
<feature type="domain" description="RNase H type-1" evidence="9">
    <location>
        <begin position="1152"/>
        <end position="1298"/>
    </location>
</feature>
<feature type="domain" description="Integrase catalytic" evidence="10">
    <location>
        <begin position="1393"/>
        <end position="1551"/>
    </location>
</feature>
<feature type="zinc finger region" description="CCHC-type" evidence="6">
    <location>
        <begin position="489"/>
        <end position="506"/>
    </location>
</feature>
<feature type="zinc finger region" description="HHCC-type" evidence="3">
    <location>
        <begin position="1338"/>
        <end position="1376"/>
    </location>
</feature>
<feature type="region of interest" description="Disordered" evidence="11">
    <location>
        <begin position="110"/>
        <end position="199"/>
    </location>
</feature>
<feature type="region of interest" description="Disordered" evidence="11">
    <location>
        <begin position="419"/>
        <end position="486"/>
    </location>
</feature>
<feature type="region of interest" description="Disordered" evidence="11">
    <location>
        <begin position="1304"/>
        <end position="1325"/>
    </location>
</feature>
<feature type="coiled-coil region" evidence="5">
    <location>
        <begin position="407"/>
        <end position="444"/>
    </location>
</feature>
<feature type="short sequence motif" description="PTAP/PSAP motif" evidence="1">
    <location>
        <begin position="116"/>
        <end position="119"/>
    </location>
</feature>
<feature type="short sequence motif" description="PPXY motif" evidence="1">
    <location>
        <begin position="139"/>
        <end position="142"/>
    </location>
</feature>
<feature type="compositionally biased region" description="Pro residues" evidence="11">
    <location>
        <begin position="137"/>
        <end position="151"/>
    </location>
</feature>
<feature type="compositionally biased region" description="Basic and acidic residues" evidence="11">
    <location>
        <begin position="419"/>
        <end position="442"/>
    </location>
</feature>
<feature type="compositionally biased region" description="Polar residues" evidence="11">
    <location>
        <begin position="461"/>
        <end position="476"/>
    </location>
</feature>
<feature type="compositionally biased region" description="Basic and acidic residues" evidence="11">
    <location>
        <begin position="1316"/>
        <end position="1325"/>
    </location>
</feature>
<feature type="active site" description="Protease; shared with dimeric partner" evidence="7">
    <location>
        <position position="548"/>
    </location>
</feature>
<feature type="binding site" evidence="8">
    <location>
        <position position="788"/>
    </location>
    <ligand>
        <name>Mg(2+)</name>
        <dbReference type="ChEBI" id="CHEBI:18420"/>
        <label>1</label>
        <note>catalytic</note>
    </ligand>
</feature>
<feature type="binding site" evidence="8">
    <location>
        <position position="862"/>
    </location>
    <ligand>
        <name>Mg(2+)</name>
        <dbReference type="ChEBI" id="CHEBI:18420"/>
        <label>1</label>
        <note>catalytic</note>
    </ligand>
</feature>
<feature type="binding site" evidence="8">
    <location>
        <position position="863"/>
    </location>
    <ligand>
        <name>Mg(2+)</name>
        <dbReference type="ChEBI" id="CHEBI:18420"/>
        <label>1</label>
        <note>catalytic</note>
    </ligand>
</feature>
<feature type="binding site" evidence="9">
    <location>
        <position position="1161"/>
    </location>
    <ligand>
        <name>Mg(2+)</name>
        <dbReference type="ChEBI" id="CHEBI:18420"/>
        <label>2</label>
    </ligand>
</feature>
<feature type="binding site" evidence="9">
    <location>
        <position position="1161"/>
    </location>
    <ligand>
        <name>Mg(2+)</name>
        <dbReference type="ChEBI" id="CHEBI:18420"/>
        <label>3</label>
    </ligand>
</feature>
<feature type="binding site" evidence="9">
    <location>
        <position position="1199"/>
    </location>
    <ligand>
        <name>Mg(2+)</name>
        <dbReference type="ChEBI" id="CHEBI:18420"/>
        <label>2</label>
    </ligand>
</feature>
<feature type="binding site" evidence="9">
    <location>
        <position position="1220"/>
    </location>
    <ligand>
        <name>Mg(2+)</name>
        <dbReference type="ChEBI" id="CHEBI:18420"/>
        <label>2</label>
    </ligand>
</feature>
<feature type="binding site" evidence="9">
    <location>
        <position position="1290"/>
    </location>
    <ligand>
        <name>Mg(2+)</name>
        <dbReference type="ChEBI" id="CHEBI:18420"/>
        <label>3</label>
    </ligand>
</feature>
<feature type="binding site" evidence="10">
    <location>
        <position position="1404"/>
    </location>
    <ligand>
        <name>Mg(2+)</name>
        <dbReference type="ChEBI" id="CHEBI:18420"/>
        <label>4</label>
        <note>catalytic</note>
    </ligand>
</feature>
<feature type="binding site" evidence="10">
    <location>
        <position position="1463"/>
    </location>
    <ligand>
        <name>Mg(2+)</name>
        <dbReference type="ChEBI" id="CHEBI:18420"/>
        <label>4</label>
        <note>catalytic</note>
    </ligand>
</feature>
<feature type="site" description="Cleavage; by viral protease" evidence="3">
    <location>
        <begin position="125"/>
        <end position="126"/>
    </location>
</feature>
<feature type="site" description="Cleavage; by viral protease" evidence="3">
    <location>
        <begin position="195"/>
        <end position="196"/>
    </location>
</feature>
<feature type="site" description="Cleavage; by viral protease" evidence="3">
    <location>
        <begin position="454"/>
        <end position="455"/>
    </location>
</feature>
<feature type="site" description="Cleavage; by viral protease" evidence="3">
    <location>
        <begin position="516"/>
        <end position="517"/>
    </location>
</feature>
<feature type="site" description="Cleavage; by viral protease" evidence="3">
    <location>
        <begin position="640"/>
        <end position="641"/>
    </location>
</feature>
<feature type="site" description="Cleavage; by viral protease" evidence="3">
    <location>
        <begin position="1309"/>
        <end position="1310"/>
    </location>
</feature>
<feature type="lipid moiety-binding region" description="N-myristoyl glycine; by host" evidence="5">
    <location>
        <position position="2"/>
    </location>
</feature>
<comment type="function">
    <molecule>Gag-Pol polyprotein</molecule>
    <text evidence="1">Plays a role in budding and is processed by the viral protease during virion maturation outside the cell. During budding, it recruits, in a PPXY-dependent or independent manner, Nedd4-like ubiquitin ligases that conjugate ubiquitin molecules to Gag-Pol, or to Gag-Pol binding host factors. Interaction with HECT ubiquitin ligases probably links the viral protein to the host ESCRT pathway and facilitates release.</text>
</comment>
<comment type="function">
    <molecule>Matrix protein p15</molecule>
    <text evidence="1">Targets Gag and gag-pol polyproteins to the plasma membrane via a multipartite membrane binding signal, that includes its myristoylated N-terminus. Also mediates nuclear localization of the pre-integration complex.</text>
</comment>
<comment type="function">
    <molecule>RNA-binding phosphoprotein p12</molecule>
    <text evidence="3">Constituent of the pre-integration complex (PIC) which tethers the latter to mitotic chromosomes. This allows the integration of the viral genome into the host DNA.</text>
</comment>
<comment type="function">
    <molecule>Capsid protein p30</molecule>
    <text evidence="2">Forms the spherical core of the virion that encapsulates the genomic RNA-nucleocapsid complex.</text>
</comment>
<comment type="function">
    <molecule>Nucleocapsid protein p10-Pol</molecule>
    <text evidence="1 3">Involved in the packaging and encapsidation of two copies of the genome (By similarity). Binds with high affinity to conserved UCUG elements within the packaging signal, located near the 5'-end of the genome (By similarity). This binding is dependent on genome dimerization (By similarity). Acts as a nucleic acid chaperone which is involved in rearrangement of nucleic acid secondary structures during gRNA retrotranscription (By similarity).</text>
</comment>
<comment type="function">
    <molecule>Protease</molecule>
    <text evidence="7">The aspartyl protease mediates proteolytic cleavages of Gag and Gag-Pol polyproteins during or shortly after the release of the virion from the plasma membrane. Cleavages take place as an ordered, step-wise cascade to yield mature proteins. This process is called maturation. Displays maximal activity during the budding process just prior to particle release from the cell.</text>
</comment>
<comment type="function">
    <molecule>Reverse transcriptase/ribonuclease H</molecule>
    <text evidence="5">RT is a multifunctional enzyme that converts the viral dimeric RNA genome into dsDNA in the cytoplasm, shortly after virus entry into the cell. This enzyme displays a DNA polymerase activity that can copy either DNA or RNA templates, and a ribonuclease H (RNase H) activity that cleaves the RNA strand of RNA-DNA heteroduplexes in a partially processive 3' to 5' endonucleasic mode. Conversion of viral genomic RNA into dsDNA requires many steps. A tRNA binds to the primer-binding site (PBS) situated at the 5' end of the viral RNA. RT uses the 3' end of the tRNA primer to perform a short round of RNA-dependent minus-strand DNA synthesis. The reading proceeds through the U5 region and ends after the repeated (R) region which is present at both ends of viral RNA. The portion of the RNA-DNA heteroduplex is digested by the RNase H, resulting in a ssDNA product attached to the tRNA primer. This ssDNA/tRNA hybridizes with the identical R region situated at the 3' end of viral RNA. This template exchange, known as minus-strand DNA strong stop transfer, can be either intra- or intermolecular. RT uses the 3' end of this newly synthesized short ssDNA to perform the RNA-dependent minus-strand DNA synthesis of the whole template. RNase H digests the RNA template except for a polypurine tract (PPT) situated at the 5' end of the genome. It is not clear if both polymerase and RNase H activities are simultaneous. RNase H probably can proceed both in a polymerase-dependent (RNA cut into small fragments by the same RT performing DNA synthesis) and a polymerase-independent mode (cleavage of remaining RNA fragments by free RTs). Secondly, RT performs DNA-directed plus-strand DNA synthesis using the PPT that has not been removed by RNase H as primers. PPT and tRNA primers are then removed by RNase H. The 3' and 5' ssDNA PBS regions hybridize to form a circular dsDNA intermediate. Strand displacement synthesis by RT to the PBS and PPT ends produces a blunt ended, linear dsDNA copy of the viral genome that includes long terminal repeats (LTRs) at both ends.</text>
</comment>
<comment type="function">
    <molecule>Integrase</molecule>
    <text evidence="3">Catalyzes viral DNA integration into the host chromosome, by performing a series of DNA cutting and joining reactions. This enzyme activity takes place after virion entry into a cell and reverse transcription of the RNA genome in dsDNA. The first step in the integration process is 3' processing. This step requires a complex comprising the viral genome, matrix protein and integrase. This complex is called the pre-integration complex (PIC). The integrase protein removes 2 nucleotides from each 3' end of the viral DNA, leaving recessed CA OH's at the 3' ends. In the second step that requires cell division, the PIC enters cell nucleus. In the third step, termed strand transfer, the integrase protein joins the previously processed 3' ends to the 5' ends of strands of target cellular DNA at the site of integration. The last step is viral DNA integration into host chromosome.</text>
</comment>
<comment type="catalytic activity">
    <reaction evidence="8">
        <text>DNA(n) + a 2'-deoxyribonucleoside 5'-triphosphate = DNA(n+1) + diphosphate</text>
        <dbReference type="Rhea" id="RHEA:22508"/>
        <dbReference type="Rhea" id="RHEA-COMP:17339"/>
        <dbReference type="Rhea" id="RHEA-COMP:17340"/>
        <dbReference type="ChEBI" id="CHEBI:33019"/>
        <dbReference type="ChEBI" id="CHEBI:61560"/>
        <dbReference type="ChEBI" id="CHEBI:173112"/>
        <dbReference type="EC" id="2.7.7.49"/>
    </reaction>
</comment>
<comment type="catalytic activity">
    <reaction evidence="8">
        <text>DNA(n) + a 2'-deoxyribonucleoside 5'-triphosphate = DNA(n+1) + diphosphate</text>
        <dbReference type="Rhea" id="RHEA:22508"/>
        <dbReference type="Rhea" id="RHEA-COMP:17339"/>
        <dbReference type="Rhea" id="RHEA-COMP:17340"/>
        <dbReference type="ChEBI" id="CHEBI:33019"/>
        <dbReference type="ChEBI" id="CHEBI:61560"/>
        <dbReference type="ChEBI" id="CHEBI:173112"/>
        <dbReference type="EC" id="2.7.7.7"/>
    </reaction>
</comment>
<comment type="catalytic activity">
    <reaction evidence="9">
        <text>Endonucleolytic cleavage to 5'-phosphomonoester.</text>
        <dbReference type="EC" id="3.1.26.4"/>
    </reaction>
</comment>
<comment type="cofactor">
    <cofactor evidence="8">
        <name>Mg(2+)</name>
        <dbReference type="ChEBI" id="CHEBI:18420"/>
    </cofactor>
    <text evidence="8">The RT polymerase active site binds 2 magnesium ions.</text>
</comment>
<comment type="cofactor">
    <cofactor evidence="3">
        <name>Mg(2+)</name>
        <dbReference type="ChEBI" id="CHEBI:18420"/>
    </cofactor>
    <text evidence="3">Binds 1 magnesium ion for ribonuclease H (RNase H) activity.</text>
</comment>
<comment type="cofactor">
    <cofactor evidence="3">
        <name>Mg(2+)</name>
        <dbReference type="ChEBI" id="CHEBI:18420"/>
    </cofactor>
    <text evidence="3">Magnesium ions are required for integrase activity. Binds at least 1, maybe 2 magnesium ions.</text>
</comment>
<comment type="activity regulation">
    <molecule>Protease</molecule>
    <text evidence="3">Most efficiently inhibited by Amprenavir, which is able to block Gag-Pol processing in infected cells.</text>
</comment>
<comment type="subunit">
    <molecule>Capsid protein p30</molecule>
    <text evidence="3">Homohexamer; further associates as homomultimer (By similarity). The virus core is composed of a lattice formed from hexagonal rings, each containing six capsid monomers (By similarity).</text>
</comment>
<comment type="subunit">
    <molecule>Gag-Pol polyprotein</molecule>
    <text evidence="3">Interacts (via PPXY motif) with host NEDD4 (By similarity). Interacts (via PSAP motif) with host TSG101 (By similarity).</text>
</comment>
<comment type="subunit">
    <molecule>Reverse transcriptase/ribonuclease H</molecule>
    <text evidence="3 12">The reverse transcriptase is a monomer (Potential). Interacts (via RNase domains) with host release factor ETF1; this interaction is essential for translational readthrough of amber codon between viral gag and pol genes, as well as for viral replication (By similarity).</text>
</comment>
<comment type="subunit">
    <molecule>Integrase</molecule>
    <text evidence="3">Homodimer (By similarity).</text>
</comment>
<comment type="subcellular location">
    <molecule>Gag-Pol polyprotein</molecule>
    <subcellularLocation>
        <location evidence="1">Virion</location>
    </subcellularLocation>
    <subcellularLocation>
        <location evidence="1">Host cell membrane</location>
        <topology evidence="1">Lipid-anchor</topology>
    </subcellularLocation>
    <subcellularLocation>
        <location evidence="1">Host late endosome membrane</location>
        <topology evidence="1">Lipid-anchor</topology>
    </subcellularLocation>
    <subcellularLocation>
        <location evidence="4">Host endosome</location>
        <location evidence="4">Host multivesicular body</location>
    </subcellularLocation>
    <text evidence="3">These locations are probably linked to virus assembly sites.</text>
</comment>
<comment type="subcellular location">
    <molecule>Matrix protein p15</molecule>
    <subcellularLocation>
        <location evidence="3">Virion</location>
    </subcellularLocation>
</comment>
<comment type="subcellular location">
    <molecule>Capsid protein p30</molecule>
    <subcellularLocation>
        <location evidence="3">Virion</location>
    </subcellularLocation>
</comment>
<comment type="subcellular location">
    <molecule>Nucleocapsid protein p10-Pol</molecule>
    <subcellularLocation>
        <location evidence="3">Virion</location>
    </subcellularLocation>
</comment>
<comment type="subcellular location">
    <molecule>Protease</molecule>
    <subcellularLocation>
        <location evidence="3">Virion</location>
    </subcellularLocation>
</comment>
<comment type="subcellular location">
    <molecule>RNA-binding phosphoprotein p12</molecule>
    <subcellularLocation>
        <location evidence="3">Host cytoplasm</location>
    </subcellularLocation>
    <text evidence="3">Localizes to the host cytoplasm early in infection and binds to the mitotic chromosomes later on.</text>
</comment>
<comment type="domain">
    <text evidence="1">Gag polyprotein: Late-budding domains (L domains) are short sequence motifs essential for viral particle budding. They recruit proteins of the host ESCRT machinery (Endosomal Sorting Complex Required for Transport) or ESCRT-associated proteins. RNA-binding phosphoprotein p12 contains one L domain: a PPXY motif which potentially interacts with the WW domain 3 of NEDD4 E3 ubiquitin ligase. Matrix protein p15 contains one L domain: a PTAP/PSAP motif, which potentially interacts with the UEV domain of TSG101.</text>
</comment>
<comment type="PTM">
    <molecule>Gag-Pol polyprotein</molecule>
    <text evidence="3">Specific enzymatic cleavages by the viral protease yield mature proteins. The protease is released by autocatalytic cleavage. The polyprotein is cleaved during and after budding, this process is termed maturation.</text>
</comment>
<comment type="PTM">
    <molecule>RNA-binding phosphoprotein p12</molecule>
    <text evidence="3">Phosphorylated on serine residues.</text>
</comment>
<comment type="miscellaneous">
    <molecule>Gag-Pol polyprotein</molecule>
    <text evidence="3">This protein is translated as a gag-pol fusion protein by episodic readthrough of the gag protein termination codon. Readthrough of the terminator codon TAG occurs between the codons for 520-Asp and 522-Gly.</text>
</comment>
<comment type="miscellaneous">
    <molecule>Nucleocapsid protein p10-Pol</molecule>
    <text evidence="3">Nucleocapsid protein p10-Pol released from Pol polyprotein (NC-pol) is a few amino acids shorter than the nucleocapsid protein p10 released from Gag polyprotein (NC-gag).</text>
</comment>
<comment type="miscellaneous">
    <molecule>Reverse transcriptase/ribonuclease H</molecule>
    <text evidence="8">The reverse transcriptase is an error-prone enzyme that lacks a proof-reading function. High mutations rate is a direct consequence of this characteristic. RT also displays frequent template switching leading to high recombination rate. Recombination mostly occurs between homologous regions of the two copackaged RNA genomes. If these two RNA molecules derive from different viral strains, reverse transcription will give rise to highly recombinated proviral DNAs.</text>
</comment>
<comment type="similarity">
    <text evidence="12">Belongs to the retroviral Pol polyprotein family.</text>
</comment>
<proteinExistence type="inferred from homology"/>
<dbReference type="EC" id="3.4.23.-" evidence="7"/>
<dbReference type="EC" id="2.7.7.49" evidence="8"/>
<dbReference type="EC" id="2.7.7.7" evidence="8"/>
<dbReference type="EC" id="3.1.26.4" evidence="9"/>
<dbReference type="EC" id="2.7.7.-" evidence="3"/>
<dbReference type="EC" id="3.1.-.-" evidence="3"/>
<dbReference type="EMBL" id="M26927">
    <property type="protein sequence ID" value="AAA46810.1"/>
    <property type="molecule type" value="Genomic_RNA"/>
</dbReference>
<dbReference type="PIR" id="B32595">
    <property type="entry name" value="GNLJGL"/>
</dbReference>
<dbReference type="KEGG" id="vg:1491893"/>
<dbReference type="Proteomes" id="UP000008231">
    <property type="component" value="Genome"/>
</dbReference>
<dbReference type="GO" id="GO:0044185">
    <property type="term" value="C:host cell late endosome membrane"/>
    <property type="evidence" value="ECO:0007669"/>
    <property type="project" value="UniProtKB-SubCell"/>
</dbReference>
<dbReference type="GO" id="GO:0020002">
    <property type="term" value="C:host cell plasma membrane"/>
    <property type="evidence" value="ECO:0007669"/>
    <property type="project" value="UniProtKB-SubCell"/>
</dbReference>
<dbReference type="GO" id="GO:0072494">
    <property type="term" value="C:host multivesicular body"/>
    <property type="evidence" value="ECO:0007669"/>
    <property type="project" value="UniProtKB-SubCell"/>
</dbReference>
<dbReference type="GO" id="GO:0016020">
    <property type="term" value="C:membrane"/>
    <property type="evidence" value="ECO:0007669"/>
    <property type="project" value="UniProtKB-KW"/>
</dbReference>
<dbReference type="GO" id="GO:0019013">
    <property type="term" value="C:viral nucleocapsid"/>
    <property type="evidence" value="ECO:0007669"/>
    <property type="project" value="UniProtKB-KW"/>
</dbReference>
<dbReference type="GO" id="GO:0004190">
    <property type="term" value="F:aspartic-type endopeptidase activity"/>
    <property type="evidence" value="ECO:0007669"/>
    <property type="project" value="UniProtKB-KW"/>
</dbReference>
<dbReference type="GO" id="GO:0003677">
    <property type="term" value="F:DNA binding"/>
    <property type="evidence" value="ECO:0007669"/>
    <property type="project" value="UniProtKB-KW"/>
</dbReference>
<dbReference type="GO" id="GO:0003887">
    <property type="term" value="F:DNA-directed DNA polymerase activity"/>
    <property type="evidence" value="ECO:0007669"/>
    <property type="project" value="UniProtKB-KW"/>
</dbReference>
<dbReference type="GO" id="GO:0003723">
    <property type="term" value="F:RNA binding"/>
    <property type="evidence" value="ECO:0007669"/>
    <property type="project" value="UniProtKB-KW"/>
</dbReference>
<dbReference type="GO" id="GO:0003964">
    <property type="term" value="F:RNA-directed DNA polymerase activity"/>
    <property type="evidence" value="ECO:0007669"/>
    <property type="project" value="UniProtKB-KW"/>
</dbReference>
<dbReference type="GO" id="GO:0004523">
    <property type="term" value="F:RNA-DNA hybrid ribonuclease activity"/>
    <property type="evidence" value="ECO:0007669"/>
    <property type="project" value="UniProtKB-EC"/>
</dbReference>
<dbReference type="GO" id="GO:0039660">
    <property type="term" value="F:structural constituent of virion"/>
    <property type="evidence" value="ECO:0007669"/>
    <property type="project" value="UniProtKB-KW"/>
</dbReference>
<dbReference type="GO" id="GO:0008270">
    <property type="term" value="F:zinc ion binding"/>
    <property type="evidence" value="ECO:0007669"/>
    <property type="project" value="UniProtKB-KW"/>
</dbReference>
<dbReference type="GO" id="GO:0015074">
    <property type="term" value="P:DNA integration"/>
    <property type="evidence" value="ECO:0007669"/>
    <property type="project" value="UniProtKB-KW"/>
</dbReference>
<dbReference type="GO" id="GO:0006310">
    <property type="term" value="P:DNA recombination"/>
    <property type="evidence" value="ECO:0007669"/>
    <property type="project" value="UniProtKB-KW"/>
</dbReference>
<dbReference type="GO" id="GO:0075713">
    <property type="term" value="P:establishment of integrated proviral latency"/>
    <property type="evidence" value="ECO:0007669"/>
    <property type="project" value="UniProtKB-KW"/>
</dbReference>
<dbReference type="GO" id="GO:0006508">
    <property type="term" value="P:proteolysis"/>
    <property type="evidence" value="ECO:0007669"/>
    <property type="project" value="UniProtKB-KW"/>
</dbReference>
<dbReference type="GO" id="GO:0046718">
    <property type="term" value="P:symbiont entry into host cell"/>
    <property type="evidence" value="ECO:0007669"/>
    <property type="project" value="UniProtKB-KW"/>
</dbReference>
<dbReference type="GO" id="GO:0044826">
    <property type="term" value="P:viral genome integration into host DNA"/>
    <property type="evidence" value="ECO:0007669"/>
    <property type="project" value="UniProtKB-KW"/>
</dbReference>
<dbReference type="GO" id="GO:0019068">
    <property type="term" value="P:virion assembly"/>
    <property type="evidence" value="ECO:0007669"/>
    <property type="project" value="InterPro"/>
</dbReference>
<dbReference type="CDD" id="cd09273">
    <property type="entry name" value="RNase_HI_RT_Bel"/>
    <property type="match status" value="1"/>
</dbReference>
<dbReference type="CDD" id="cd06095">
    <property type="entry name" value="RP_RTVL_H_like"/>
    <property type="match status" value="1"/>
</dbReference>
<dbReference type="CDD" id="cd03715">
    <property type="entry name" value="RT_ZFREV_like"/>
    <property type="match status" value="1"/>
</dbReference>
<dbReference type="FunFam" id="3.30.70.270:FF:000020">
    <property type="entry name" value="Transposon Tf2-6 polyprotein-like Protein"/>
    <property type="match status" value="1"/>
</dbReference>
<dbReference type="Gene3D" id="1.10.340.70">
    <property type="match status" value="1"/>
</dbReference>
<dbReference type="Gene3D" id="2.30.30.850">
    <property type="match status" value="1"/>
</dbReference>
<dbReference type="Gene3D" id="3.10.20.370">
    <property type="match status" value="1"/>
</dbReference>
<dbReference type="Gene3D" id="3.30.70.270">
    <property type="match status" value="2"/>
</dbReference>
<dbReference type="Gene3D" id="2.40.70.10">
    <property type="entry name" value="Acid Proteases"/>
    <property type="match status" value="1"/>
</dbReference>
<dbReference type="Gene3D" id="1.10.150.180">
    <property type="entry name" value="Gamma-retroviral matrix domain"/>
    <property type="match status" value="1"/>
</dbReference>
<dbReference type="Gene3D" id="3.10.10.10">
    <property type="entry name" value="HIV Type 1 Reverse Transcriptase, subunit A, domain 1"/>
    <property type="match status" value="1"/>
</dbReference>
<dbReference type="Gene3D" id="1.10.375.10">
    <property type="entry name" value="Human Immunodeficiency Virus Type 1 Capsid Protein"/>
    <property type="match status" value="1"/>
</dbReference>
<dbReference type="Gene3D" id="3.30.420.10">
    <property type="entry name" value="Ribonuclease H-like superfamily/Ribonuclease H"/>
    <property type="match status" value="2"/>
</dbReference>
<dbReference type="Gene3D" id="4.10.60.10">
    <property type="entry name" value="Zinc finger, CCHC-type"/>
    <property type="match status" value="1"/>
</dbReference>
<dbReference type="InterPro" id="IPR001969">
    <property type="entry name" value="Aspartic_peptidase_AS"/>
</dbReference>
<dbReference type="InterPro" id="IPR043502">
    <property type="entry name" value="DNA/RNA_pol_sf"/>
</dbReference>
<dbReference type="InterPro" id="IPR000840">
    <property type="entry name" value="G_retro_matrix"/>
</dbReference>
<dbReference type="InterPro" id="IPR036946">
    <property type="entry name" value="G_retro_matrix_sf"/>
</dbReference>
<dbReference type="InterPro" id="IPR003036">
    <property type="entry name" value="Gag_P30"/>
</dbReference>
<dbReference type="InterPro" id="IPR001584">
    <property type="entry name" value="Integrase_cat-core"/>
</dbReference>
<dbReference type="InterPro" id="IPR040643">
    <property type="entry name" value="MLVIN_C"/>
</dbReference>
<dbReference type="InterPro" id="IPR001995">
    <property type="entry name" value="Peptidase_A2_cat"/>
</dbReference>
<dbReference type="InterPro" id="IPR021109">
    <property type="entry name" value="Peptidase_aspartic_dom_sf"/>
</dbReference>
<dbReference type="InterPro" id="IPR018061">
    <property type="entry name" value="Retropepsins"/>
</dbReference>
<dbReference type="InterPro" id="IPR008919">
    <property type="entry name" value="Retrov_capsid_N"/>
</dbReference>
<dbReference type="InterPro" id="IPR050462">
    <property type="entry name" value="Retroviral_Gag-Pol_poly"/>
</dbReference>
<dbReference type="InterPro" id="IPR010999">
    <property type="entry name" value="Retrovr_matrix"/>
</dbReference>
<dbReference type="InterPro" id="IPR043128">
    <property type="entry name" value="Rev_trsase/Diguanyl_cyclase"/>
</dbReference>
<dbReference type="InterPro" id="IPR012337">
    <property type="entry name" value="RNaseH-like_sf"/>
</dbReference>
<dbReference type="InterPro" id="IPR002156">
    <property type="entry name" value="RNaseH_domain"/>
</dbReference>
<dbReference type="InterPro" id="IPR036397">
    <property type="entry name" value="RNaseH_sf"/>
</dbReference>
<dbReference type="InterPro" id="IPR000477">
    <property type="entry name" value="RT_dom"/>
</dbReference>
<dbReference type="InterPro" id="IPR041577">
    <property type="entry name" value="RT_RNaseH_2"/>
</dbReference>
<dbReference type="InterPro" id="IPR001878">
    <property type="entry name" value="Znf_CCHC"/>
</dbReference>
<dbReference type="InterPro" id="IPR036875">
    <property type="entry name" value="Znf_CCHC_sf"/>
</dbReference>
<dbReference type="InterPro" id="IPR015416">
    <property type="entry name" value="Znf_H2C2_histone_UAS-bd"/>
</dbReference>
<dbReference type="PANTHER" id="PTHR33166">
    <property type="entry name" value="GAG_P30 DOMAIN-CONTAINING PROTEIN"/>
    <property type="match status" value="1"/>
</dbReference>
<dbReference type="Pfam" id="PF01140">
    <property type="entry name" value="Gag_MA"/>
    <property type="match status" value="1"/>
</dbReference>
<dbReference type="Pfam" id="PF02093">
    <property type="entry name" value="Gag_p30"/>
    <property type="match status" value="1"/>
</dbReference>
<dbReference type="Pfam" id="PF18697">
    <property type="entry name" value="MLVIN_C"/>
    <property type="match status" value="1"/>
</dbReference>
<dbReference type="Pfam" id="PF00075">
    <property type="entry name" value="RNase_H"/>
    <property type="match status" value="1"/>
</dbReference>
<dbReference type="Pfam" id="PF17919">
    <property type="entry name" value="RT_RNaseH_2"/>
    <property type="match status" value="1"/>
</dbReference>
<dbReference type="Pfam" id="PF00665">
    <property type="entry name" value="rve"/>
    <property type="match status" value="1"/>
</dbReference>
<dbReference type="Pfam" id="PF00077">
    <property type="entry name" value="RVP"/>
    <property type="match status" value="1"/>
</dbReference>
<dbReference type="Pfam" id="PF00078">
    <property type="entry name" value="RVT_1"/>
    <property type="match status" value="1"/>
</dbReference>
<dbReference type="Pfam" id="PF00098">
    <property type="entry name" value="zf-CCHC"/>
    <property type="match status" value="1"/>
</dbReference>
<dbReference type="Pfam" id="PF09337">
    <property type="entry name" value="zf-H2C2"/>
    <property type="match status" value="1"/>
</dbReference>
<dbReference type="SMART" id="SM00343">
    <property type="entry name" value="ZnF_C2HC"/>
    <property type="match status" value="1"/>
</dbReference>
<dbReference type="SUPFAM" id="SSF50630">
    <property type="entry name" value="Acid proteases"/>
    <property type="match status" value="1"/>
</dbReference>
<dbReference type="SUPFAM" id="SSF56672">
    <property type="entry name" value="DNA/RNA polymerases"/>
    <property type="match status" value="1"/>
</dbReference>
<dbReference type="SUPFAM" id="SSF47836">
    <property type="entry name" value="Retroviral matrix proteins"/>
    <property type="match status" value="1"/>
</dbReference>
<dbReference type="SUPFAM" id="SSF47943">
    <property type="entry name" value="Retrovirus capsid protein, N-terminal core domain"/>
    <property type="match status" value="1"/>
</dbReference>
<dbReference type="SUPFAM" id="SSF57756">
    <property type="entry name" value="Retrovirus zinc finger-like domains"/>
    <property type="match status" value="1"/>
</dbReference>
<dbReference type="SUPFAM" id="SSF53098">
    <property type="entry name" value="Ribonuclease H-like"/>
    <property type="match status" value="2"/>
</dbReference>
<dbReference type="PROSITE" id="PS50175">
    <property type="entry name" value="ASP_PROT_RETROV"/>
    <property type="match status" value="1"/>
</dbReference>
<dbReference type="PROSITE" id="PS00141">
    <property type="entry name" value="ASP_PROTEASE"/>
    <property type="match status" value="1"/>
</dbReference>
<dbReference type="PROSITE" id="PS50994">
    <property type="entry name" value="INTEGRASE"/>
    <property type="match status" value="1"/>
</dbReference>
<dbReference type="PROSITE" id="PS50879">
    <property type="entry name" value="RNASE_H_1"/>
    <property type="match status" value="1"/>
</dbReference>
<dbReference type="PROSITE" id="PS50878">
    <property type="entry name" value="RT_POL"/>
    <property type="match status" value="1"/>
</dbReference>
<dbReference type="PROSITE" id="PS50158">
    <property type="entry name" value="ZF_CCHC"/>
    <property type="match status" value="1"/>
</dbReference>
<protein>
    <recommendedName>
        <fullName>Gag-Pol polyprotein</fullName>
    </recommendedName>
    <component>
        <recommendedName>
            <fullName>Matrix protein p15</fullName>
            <shortName>MA</shortName>
        </recommendedName>
    </component>
    <component>
        <recommendedName>
            <fullName>RNA-binding phosphoprotein p12</fullName>
        </recommendedName>
        <alternativeName>
            <fullName>pp12</fullName>
        </alternativeName>
    </component>
    <component>
        <recommendedName>
            <fullName>Capsid protein p30</fullName>
            <shortName>CA</shortName>
        </recommendedName>
    </component>
    <component>
        <recommendedName>
            <fullName>Nucleocapsid protein p10-Pol</fullName>
            <shortName>NC-pol</shortName>
        </recommendedName>
    </component>
    <component>
        <recommendedName>
            <fullName>Protease</fullName>
            <ecNumber evidence="7">3.4.23.-</ecNumber>
        </recommendedName>
    </component>
    <component>
        <recommendedName>
            <fullName>Reverse transcriptase/ribonuclease H</fullName>
            <shortName>RT</shortName>
            <ecNumber evidence="8">2.7.7.49</ecNumber>
            <ecNumber evidence="8">2.7.7.7</ecNumber>
            <ecNumber evidence="9">3.1.26.4</ecNumber>
        </recommendedName>
    </component>
    <component>
        <recommendedName>
            <fullName>Integrase</fullName>
            <shortName>IN</shortName>
            <ecNumber evidence="3">2.7.7.-</ecNumber>
            <ecNumber evidence="3">3.1.-.-</ecNumber>
        </recommendedName>
    </component>
</protein>
<gene>
    <name type="primary">pol</name>
</gene>
<reference key="1">
    <citation type="journal article" date="1989" name="Virology">
        <title>Genetic organization of gibbon ape leukemia virus.</title>
        <authorList>
            <person name="Delassus S."/>
            <person name="Sonigo P."/>
            <person name="Wain-Hobson S."/>
        </authorList>
    </citation>
    <scope>NUCLEOTIDE SEQUENCE [GENOMIC RNA]</scope>
</reference>
<name>POL_GALV</name>
<evidence type="ECO:0000250" key="1">
    <source>
        <dbReference type="UniProtKB" id="P03332"/>
    </source>
</evidence>
<evidence type="ECO:0000250" key="2">
    <source>
        <dbReference type="UniProtKB" id="P03336"/>
    </source>
</evidence>
<evidence type="ECO:0000250" key="3">
    <source>
        <dbReference type="UniProtKB" id="P03355"/>
    </source>
</evidence>
<evidence type="ECO:0000250" key="4">
    <source>
        <dbReference type="UniProtKB" id="P26807"/>
    </source>
</evidence>
<evidence type="ECO:0000255" key="5"/>
<evidence type="ECO:0000255" key="6">
    <source>
        <dbReference type="PROSITE-ProRule" id="PRU00047"/>
    </source>
</evidence>
<evidence type="ECO:0000255" key="7">
    <source>
        <dbReference type="PROSITE-ProRule" id="PRU00275"/>
    </source>
</evidence>
<evidence type="ECO:0000255" key="8">
    <source>
        <dbReference type="PROSITE-ProRule" id="PRU00405"/>
    </source>
</evidence>
<evidence type="ECO:0000255" key="9">
    <source>
        <dbReference type="PROSITE-ProRule" id="PRU00408"/>
    </source>
</evidence>
<evidence type="ECO:0000255" key="10">
    <source>
        <dbReference type="PROSITE-ProRule" id="PRU00457"/>
    </source>
</evidence>
<evidence type="ECO:0000256" key="11">
    <source>
        <dbReference type="SAM" id="MobiDB-lite"/>
    </source>
</evidence>
<evidence type="ECO:0000305" key="12"/>
<organism>
    <name type="scientific">Gibbon ape leukemia virus</name>
    <name type="common">GALV</name>
    <dbReference type="NCBI Taxonomy" id="11840"/>
    <lineage>
        <taxon>Viruses</taxon>
        <taxon>Riboviria</taxon>
        <taxon>Pararnavirae</taxon>
        <taxon>Artverviricota</taxon>
        <taxon>Revtraviricetes</taxon>
        <taxon>Ortervirales</taxon>
        <taxon>Retroviridae</taxon>
        <taxon>Orthoretrovirinae</taxon>
        <taxon>Gammaretrovirus</taxon>
    </lineage>
</organism>